<reference key="1">
    <citation type="journal article" date="2012" name="PLoS Genet.">
        <title>The genomes of the fungal plant pathogens Cladosporium fulvum and Dothistroma septosporum reveal adaptation to different hosts and lifestyles but also signatures of common ancestry.</title>
        <authorList>
            <person name="de Wit P.J.G.M."/>
            <person name="van der Burgt A."/>
            <person name="Oekmen B."/>
            <person name="Stergiopoulos I."/>
            <person name="Abd-Elsalam K.A."/>
            <person name="Aerts A.L."/>
            <person name="Bahkali A.H."/>
            <person name="Beenen H.G."/>
            <person name="Chettri P."/>
            <person name="Cox M.P."/>
            <person name="Datema E."/>
            <person name="de Vries R.P."/>
            <person name="Dhillon B."/>
            <person name="Ganley A.R."/>
            <person name="Griffiths S.A."/>
            <person name="Guo Y."/>
            <person name="Hamelin R.C."/>
            <person name="Henrissat B."/>
            <person name="Kabir M.S."/>
            <person name="Jashni M.K."/>
            <person name="Kema G."/>
            <person name="Klaubauf S."/>
            <person name="Lapidus A."/>
            <person name="Levasseur A."/>
            <person name="Lindquist E."/>
            <person name="Mehrabi R."/>
            <person name="Ohm R.A."/>
            <person name="Owen T.J."/>
            <person name="Salamov A."/>
            <person name="Schwelm A."/>
            <person name="Schijlen E."/>
            <person name="Sun H."/>
            <person name="van den Burg H.A."/>
            <person name="van Ham R.C.H.J."/>
            <person name="Zhang S."/>
            <person name="Goodwin S.B."/>
            <person name="Grigoriev I.V."/>
            <person name="Collemare J."/>
            <person name="Bradshaw R.E."/>
        </authorList>
    </citation>
    <scope>NUCLEOTIDE SEQUENCE [LARGE SCALE GENOMIC DNA]</scope>
    <source>
        <strain>NZE10 / CBS 128990</strain>
    </source>
</reference>
<reference key="2">
    <citation type="journal article" date="2012" name="PLoS Pathog.">
        <title>Diverse lifestyles and strategies of plant pathogenesis encoded in the genomes of eighteen Dothideomycetes fungi.</title>
        <authorList>
            <person name="Ohm R.A."/>
            <person name="Feau N."/>
            <person name="Henrissat B."/>
            <person name="Schoch C.L."/>
            <person name="Horwitz B.A."/>
            <person name="Barry K.W."/>
            <person name="Condon B.J."/>
            <person name="Copeland A.C."/>
            <person name="Dhillon B."/>
            <person name="Glaser F."/>
            <person name="Hesse C.N."/>
            <person name="Kosti I."/>
            <person name="LaButti K."/>
            <person name="Lindquist E.A."/>
            <person name="Lucas S."/>
            <person name="Salamov A.A."/>
            <person name="Bradshaw R.E."/>
            <person name="Ciuffetti L."/>
            <person name="Hamelin R.C."/>
            <person name="Kema G.H.J."/>
            <person name="Lawrence C."/>
            <person name="Scott J.A."/>
            <person name="Spatafora J.W."/>
            <person name="Turgeon B.G."/>
            <person name="de Wit P.J.G.M."/>
            <person name="Zhong S."/>
            <person name="Goodwin S.B."/>
            <person name="Grigoriev I.V."/>
        </authorList>
    </citation>
    <scope>NUCLEOTIDE SEQUENCE [LARGE SCALE GENOMIC DNA]</scope>
    <source>
        <strain>NZE10 / CBS 128990</strain>
    </source>
</reference>
<reference key="3">
    <citation type="journal article" date="2002" name="Appl. Environ. Microbiol.">
        <title>Dothistroma pini, a forest pathogen, contains homologs of aflatoxin biosynthetic pathway genes.</title>
        <authorList>
            <person name="Bradshaw R.E."/>
            <person name="Bhatnagar D."/>
            <person name="Ganley R.J."/>
            <person name="Gillman C.J."/>
            <person name="Monahan B.J."/>
            <person name="Seconi J.M."/>
        </authorList>
    </citation>
    <scope>FUNCTION</scope>
</reference>
<reference key="4">
    <citation type="journal article" date="2006" name="Mycopathologia">
        <title>A polyketide synthase gene required for biosynthesis of the aflatoxin-like toxin, dothistromin.</title>
        <authorList>
            <person name="Bradshaw R.E."/>
            <person name="Jin H."/>
            <person name="Morgan B.S."/>
            <person name="Schwelm A."/>
            <person name="Teddy O.R."/>
            <person name="Young C.A."/>
            <person name="Zhang S."/>
        </authorList>
    </citation>
    <scope>FUNCTION</scope>
</reference>
<reference key="5">
    <citation type="journal article" date="2007" name="Fungal Genet. Biol.">
        <title>A fragmented aflatoxin-like gene cluster in the forest pathogen Dothistroma septosporum.</title>
        <authorList>
            <person name="Zhang S."/>
            <person name="Schwelm A."/>
            <person name="Jin H."/>
            <person name="Collins L.J."/>
            <person name="Bradshaw R.E."/>
        </authorList>
    </citation>
    <scope>FUNCTION</scope>
</reference>
<reference key="6">
    <citation type="journal article" date="2010" name="Toxins">
        <title>Genetics of dothistromin biosynthesis of Dothistroma septosporum: an update.</title>
        <authorList>
            <person name="Schwelm A."/>
            <person name="Bradshaw R.E."/>
        </authorList>
    </citation>
    <scope>REVIEW ON FUNCTION</scope>
    <scope>PATHWAY</scope>
</reference>
<reference key="7">
    <citation type="journal article" date="2013" name="Fungal Genet. Biol.">
        <title>Dothistromin genes at multiple separate loci are regulated by AflR.</title>
        <authorList>
            <person name="Chettri P."/>
            <person name="Ehrlich K.C."/>
            <person name="Cary J.W."/>
            <person name="Collemare J."/>
            <person name="Cox M.P."/>
            <person name="Griffiths S.A."/>
            <person name="Olson M.A."/>
            <person name="de Wit P.J."/>
            <person name="Bradshaw R.E."/>
        </authorList>
    </citation>
    <scope>FUNCTION</scope>
    <scope>INDUCTION</scope>
    <scope>PATHWAY</scope>
</reference>
<reference key="8">
    <citation type="journal article" date="2013" name="New Phytol.">
        <title>Fragmentation of an aflatoxin-like gene cluster in a forest pathogen.</title>
        <authorList>
            <person name="Bradshaw R.E."/>
            <person name="Slot J.C."/>
            <person name="Moore G.G."/>
            <person name="Chettri P."/>
            <person name="de Wit P.J."/>
            <person name="Ehrlich K.C."/>
            <person name="Ganley A.R."/>
            <person name="Olson M.A."/>
            <person name="Rokas A."/>
            <person name="Carbone I."/>
            <person name="Cox M.P."/>
        </authorList>
    </citation>
    <scope>FUNCTION</scope>
</reference>
<reference key="9">
    <citation type="journal article" date="2015" name="Fungal Biol.">
        <title>Regulation of the aflatoxin-like toxin dothistromin by AflJ.</title>
        <authorList>
            <person name="Chettri P."/>
            <person name="Ehrlich K.C."/>
            <person name="Bradshaw R.E."/>
        </authorList>
    </citation>
    <scope>INDUCTION</scope>
</reference>
<keyword id="KW-0378">Hydrolase</keyword>
<keyword id="KW-0456">Lyase</keyword>
<keyword id="KW-0511">Multifunctional enzyme</keyword>
<keyword id="KW-0520">NAD</keyword>
<keyword id="KW-0521">NADP</keyword>
<keyword id="KW-0560">Oxidoreductase</keyword>
<keyword id="KW-1185">Reference proteome</keyword>
<keyword id="KW-0808">Transferase</keyword>
<organism>
    <name type="scientific">Dothistroma septosporum (strain NZE10 / CBS 128990)</name>
    <name type="common">Red band needle blight fungus</name>
    <name type="synonym">Mycosphaerella pini</name>
    <dbReference type="NCBI Taxonomy" id="675120"/>
    <lineage>
        <taxon>Eukaryota</taxon>
        <taxon>Fungi</taxon>
        <taxon>Dikarya</taxon>
        <taxon>Ascomycota</taxon>
        <taxon>Pezizomycotina</taxon>
        <taxon>Dothideomycetes</taxon>
        <taxon>Dothideomycetidae</taxon>
        <taxon>Mycosphaerellales</taxon>
        <taxon>Mycosphaerellaceae</taxon>
        <taxon>Dothistroma</taxon>
    </lineage>
</organism>
<dbReference type="EC" id="2.3.1.86" evidence="12"/>
<dbReference type="EC" id="3.1.2.14" evidence="12"/>
<dbReference type="EC" id="4.2.1.59" evidence="12"/>
<dbReference type="EC" id="1.3.1.9" evidence="12"/>
<dbReference type="EC" id="2.3.1.38" evidence="12"/>
<dbReference type="EC" id="2.3.1.39" evidence="12"/>
<dbReference type="EMBL" id="KB446546">
    <property type="protein sequence ID" value="EME39032.1"/>
    <property type="molecule type" value="Genomic_DNA"/>
</dbReference>
<dbReference type="SMR" id="M2XHU6"/>
<dbReference type="STRING" id="675120.M2XHU6"/>
<dbReference type="EnsemblFungi" id="EME39032">
    <property type="protein sequence ID" value="EME39032"/>
    <property type="gene ID" value="DOTSEDRAFT_181128"/>
</dbReference>
<dbReference type="eggNOG" id="ENOG502QQJX">
    <property type="taxonomic scope" value="Eukaryota"/>
</dbReference>
<dbReference type="HOGENOM" id="CLU_000114_5_0_1"/>
<dbReference type="OMA" id="YVCAGHF"/>
<dbReference type="OrthoDB" id="4251012at2759"/>
<dbReference type="Proteomes" id="UP000016933">
    <property type="component" value="Unassembled WGS sequence"/>
</dbReference>
<dbReference type="GO" id="GO:0005835">
    <property type="term" value="C:fatty acid synthase complex"/>
    <property type="evidence" value="ECO:0007669"/>
    <property type="project" value="InterPro"/>
</dbReference>
<dbReference type="GO" id="GO:0019171">
    <property type="term" value="F:(3R)-hydroxyacyl-[acyl-carrier-protein] dehydratase activity"/>
    <property type="evidence" value="ECO:0007669"/>
    <property type="project" value="UniProtKB-EC"/>
</dbReference>
<dbReference type="GO" id="GO:0004313">
    <property type="term" value="F:[acyl-carrier-protein] S-acetyltransferase activity"/>
    <property type="evidence" value="ECO:0007669"/>
    <property type="project" value="UniProtKB-EC"/>
</dbReference>
<dbReference type="GO" id="GO:0004314">
    <property type="term" value="F:[acyl-carrier-protein] S-malonyltransferase activity"/>
    <property type="evidence" value="ECO:0007669"/>
    <property type="project" value="UniProtKB-EC"/>
</dbReference>
<dbReference type="GO" id="GO:0004318">
    <property type="term" value="F:enoyl-[acyl-carrier-protein] reductase (NADH) activity"/>
    <property type="evidence" value="ECO:0007669"/>
    <property type="project" value="UniProtKB-EC"/>
</dbReference>
<dbReference type="GO" id="GO:0004312">
    <property type="term" value="F:fatty acid synthase activity"/>
    <property type="evidence" value="ECO:0007669"/>
    <property type="project" value="InterPro"/>
</dbReference>
<dbReference type="GO" id="GO:0016297">
    <property type="term" value="F:fatty acyl-[ACP] hydrolase activity"/>
    <property type="evidence" value="ECO:0007669"/>
    <property type="project" value="UniProtKB-EC"/>
</dbReference>
<dbReference type="GO" id="GO:0004321">
    <property type="term" value="F:fatty-acyl-CoA synthase activity"/>
    <property type="evidence" value="ECO:0007669"/>
    <property type="project" value="UniProtKB-EC"/>
</dbReference>
<dbReference type="GO" id="GO:0006633">
    <property type="term" value="P:fatty acid biosynthetic process"/>
    <property type="evidence" value="ECO:0007669"/>
    <property type="project" value="InterPro"/>
</dbReference>
<dbReference type="CDD" id="cd03447">
    <property type="entry name" value="FAS_MaoC"/>
    <property type="match status" value="1"/>
</dbReference>
<dbReference type="FunFam" id="3.20.20.70:FF:000078">
    <property type="entry name" value="Fatty acid synthase beta subunit dehydratase"/>
    <property type="match status" value="1"/>
</dbReference>
<dbReference type="FunFam" id="3.40.366.10:FF:000006">
    <property type="entry name" value="Fatty acid synthase beta subunit dehydratase"/>
    <property type="match status" value="1"/>
</dbReference>
<dbReference type="Gene3D" id="1.20.930.70">
    <property type="match status" value="1"/>
</dbReference>
<dbReference type="Gene3D" id="3.30.1120.100">
    <property type="match status" value="1"/>
</dbReference>
<dbReference type="Gene3D" id="3.30.70.3330">
    <property type="match status" value="1"/>
</dbReference>
<dbReference type="Gene3D" id="6.10.140.1400">
    <property type="match status" value="1"/>
</dbReference>
<dbReference type="Gene3D" id="6.10.60.10">
    <property type="match status" value="1"/>
</dbReference>
<dbReference type="Gene3D" id="6.20.240.10">
    <property type="match status" value="1"/>
</dbReference>
<dbReference type="Gene3D" id="3.20.20.70">
    <property type="entry name" value="Aldolase class I"/>
    <property type="match status" value="1"/>
</dbReference>
<dbReference type="Gene3D" id="3.10.129.10">
    <property type="entry name" value="Hotdog Thioesterase"/>
    <property type="match status" value="1"/>
</dbReference>
<dbReference type="Gene3D" id="3.40.366.10">
    <property type="entry name" value="Malonyl-Coenzyme A Acyl Carrier Protein, domain 2"/>
    <property type="match status" value="3"/>
</dbReference>
<dbReference type="InterPro" id="IPR001227">
    <property type="entry name" value="Ac_transferase_dom_sf"/>
</dbReference>
<dbReference type="InterPro" id="IPR014043">
    <property type="entry name" value="Acyl_transferase_dom"/>
</dbReference>
<dbReference type="InterPro" id="IPR016035">
    <property type="entry name" value="Acyl_Trfase/lysoPLipase"/>
</dbReference>
<dbReference type="InterPro" id="IPR013785">
    <property type="entry name" value="Aldolase_TIM"/>
</dbReference>
<dbReference type="InterPro" id="IPR039569">
    <property type="entry name" value="FAS1-like_DH_region"/>
</dbReference>
<dbReference type="InterPro" id="IPR016452">
    <property type="entry name" value="Fas1/AflB-like"/>
</dbReference>
<dbReference type="InterPro" id="IPR013565">
    <property type="entry name" value="Fas1/AflB-like_central"/>
</dbReference>
<dbReference type="InterPro" id="IPR040883">
    <property type="entry name" value="FAS_meander"/>
</dbReference>
<dbReference type="InterPro" id="IPR003965">
    <property type="entry name" value="Fatty_acid_synthase"/>
</dbReference>
<dbReference type="InterPro" id="IPR050830">
    <property type="entry name" value="Fungal_FAS"/>
</dbReference>
<dbReference type="InterPro" id="IPR029069">
    <property type="entry name" value="HotDog_dom_sf"/>
</dbReference>
<dbReference type="InterPro" id="IPR002539">
    <property type="entry name" value="MaoC-like_dom"/>
</dbReference>
<dbReference type="InterPro" id="IPR032088">
    <property type="entry name" value="SAT"/>
</dbReference>
<dbReference type="PANTHER" id="PTHR10982:SF21">
    <property type="entry name" value="FATTY ACID SYNTHASE SUBUNIT BETA"/>
    <property type="match status" value="1"/>
</dbReference>
<dbReference type="PANTHER" id="PTHR10982">
    <property type="entry name" value="MALONYL COA-ACYL CARRIER PROTEIN TRANSACYLASE"/>
    <property type="match status" value="1"/>
</dbReference>
<dbReference type="Pfam" id="PF00698">
    <property type="entry name" value="Acyl_transf_1"/>
    <property type="match status" value="1"/>
</dbReference>
<dbReference type="Pfam" id="PF08354">
    <property type="entry name" value="Fas1-AflB-like_hel"/>
    <property type="match status" value="1"/>
</dbReference>
<dbReference type="Pfam" id="PF13452">
    <property type="entry name" value="FAS1_DH_region"/>
    <property type="match status" value="1"/>
</dbReference>
<dbReference type="Pfam" id="PF22235">
    <property type="entry name" value="FAS1_thioest_ins"/>
    <property type="match status" value="1"/>
</dbReference>
<dbReference type="Pfam" id="PF17951">
    <property type="entry name" value="FAS_meander"/>
    <property type="match status" value="1"/>
</dbReference>
<dbReference type="Pfam" id="PF01575">
    <property type="entry name" value="MaoC_dehydratas"/>
    <property type="match status" value="1"/>
</dbReference>
<dbReference type="Pfam" id="PF16073">
    <property type="entry name" value="SAT"/>
    <property type="match status" value="1"/>
</dbReference>
<dbReference type="PIRSF" id="PIRSF005562">
    <property type="entry name" value="FAS_yeast_beta"/>
    <property type="match status" value="1"/>
</dbReference>
<dbReference type="PRINTS" id="PR01483">
    <property type="entry name" value="FASYNTHASE"/>
</dbReference>
<dbReference type="SMART" id="SM00827">
    <property type="entry name" value="PKS_AT"/>
    <property type="match status" value="1"/>
</dbReference>
<dbReference type="SUPFAM" id="SSF52151">
    <property type="entry name" value="FabD/lysophospholipase-like"/>
    <property type="match status" value="2"/>
</dbReference>
<dbReference type="SUPFAM" id="SSF51395">
    <property type="entry name" value="FMN-linked oxidoreductases"/>
    <property type="match status" value="1"/>
</dbReference>
<dbReference type="SUPFAM" id="SSF54637">
    <property type="entry name" value="Thioesterase/thiol ester dehydrase-isomerase"/>
    <property type="match status" value="2"/>
</dbReference>
<gene>
    <name evidence="9" type="primary">hexB</name>
    <name type="ORF">DOTSEDRAFT_181128</name>
</gene>
<proteinExistence type="evidence at transcript level"/>
<comment type="function">
    <text evidence="2 4 5 8 11 12 13">Fatty acid synthase beta subunit; part of the fragmented gene cluster that mediates the biosynthesis of dothistromin (DOTH), a polyketide toxin very similar in structure to the aflatoxin precursor, versicolorin B (PubMed:12039746, PubMed:17683963, PubMed:22069571, PubMed:23207690, PubMed:23448391). The first step of the pathway is the conversion of acetate to norsolorinic acid (NOR) and requires the fatty acid synthase subunits hexA and hexB, as well as the polyketide synthase pksA (PubMed:16649078, PubMed:23207690). PksA combines a hexanoyl starter unit and 7 malonyl-CoA extender units to synthesize the precursor NOR (By similarity). The hexanoyl starter unit is provided to the acyl-carrier protein (ACP) domain by the fungal fatty acid synthase hexA/hexB (By similarity). The second step is the conversion of NOR to averantin (AVN) and requires the norsolorinic acid ketoreductase nor1, which catalyzes the dehydration of norsolorinic acid to form (1'S)-averantin (PubMed:23207690). The cytochrome P450 monooxygenase avnA then catalyzes the hydroxylation of AVN to 5'hydroxyaverantin (HAVN) (PubMed:23207690). The next step is performed by adhA that transforms HAVN to averufin (AVF) (PubMed:23207690). Averufin might then be converted to hydroxyversicolorone by cypX and avfA (PubMed:23207690). Hydroxyversicolorone is further converted versiconal hemiacetal acetate (VHA) by moxY (PubMed:23207690). VHA is then the substrate for the versiconal hemiacetal acetate esterase est1 to yield versiconal (VAL) (PubMed:23207690). Versicolorin B synthase vbsA then converts VAL to versicolorin B (VERB) by closing the bisfuran ring (PubMed:16649078, PubMed:23207690). Then, the activity of the versicolorin B desaturase verB leads to versicolorin A (VERA) (PubMed:23207690). DotB, a predicted chloroperoxidase, may perform epoxidation of the A-ring of VERA (PubMed:23207690). Alternatively, a cytochrome P450, such as cypX or avnA could catalyze this step (PubMed:23207690). It is also possible that another, uncharacterized, cytochrome P450 enzyme is responsible for this step (PubMed:23207690). Opening of the epoxide could potentially be achieved by the epoxide hydrolase epoA (PubMed:23207690). However, epoA seems not to be required for DOTH biosynthesis, but other epoxide hydrolases may have the ability to complement this hydrolysis (PubMed:23207690). Alternatively, opening of the epoxide ring could be achieved non-enzymatically (PubMed:23207690). The next step is the deoxygenation of ring A to yield the 5,8-dihydroxyanthraquinone which is most likely catalyzed by the NADPH dehydrogenase encoded by ver1 (PubMed:23207690). The last stages of DOTH biosynthesis are proposed to involve hydroxylation of the bisfuran (PubMed:23207690). OrdB and norB might have oxidative roles here (PubMed:23207690). An alternative possibility is that cytochrome P450 monoogenases such as avnA and cypX might perform these steps in addition to previously proposed steps (PubMed:23207690).</text>
</comment>
<comment type="catalytic activity">
    <reaction evidence="2">
        <text>acetyl-CoA + n malonyl-CoA + 2n NADPH + 4n H(+) = a long-chain-acyl-CoA + n CoA + n CO2 + 2n NADP(+).</text>
        <dbReference type="EC" id="2.3.1.86"/>
    </reaction>
</comment>
<comment type="catalytic activity">
    <reaction evidence="2">
        <text>holo-[ACP] + acetyl-CoA = acetyl-[ACP] + CoA</text>
        <dbReference type="Rhea" id="RHEA:41788"/>
        <dbReference type="Rhea" id="RHEA-COMP:9621"/>
        <dbReference type="Rhea" id="RHEA-COMP:9685"/>
        <dbReference type="ChEBI" id="CHEBI:57287"/>
        <dbReference type="ChEBI" id="CHEBI:57288"/>
        <dbReference type="ChEBI" id="CHEBI:64479"/>
        <dbReference type="ChEBI" id="CHEBI:78446"/>
        <dbReference type="EC" id="2.3.1.38"/>
    </reaction>
</comment>
<comment type="catalytic activity">
    <reaction evidence="2">
        <text>holo-[ACP] + malonyl-CoA = malonyl-[ACP] + CoA</text>
        <dbReference type="Rhea" id="RHEA:41792"/>
        <dbReference type="Rhea" id="RHEA-COMP:9623"/>
        <dbReference type="Rhea" id="RHEA-COMP:9685"/>
        <dbReference type="ChEBI" id="CHEBI:57287"/>
        <dbReference type="ChEBI" id="CHEBI:57384"/>
        <dbReference type="ChEBI" id="CHEBI:64479"/>
        <dbReference type="ChEBI" id="CHEBI:78449"/>
        <dbReference type="EC" id="2.3.1.39"/>
    </reaction>
</comment>
<comment type="catalytic activity">
    <reaction evidence="2">
        <text>a (3R)-hydroxyacyl-[ACP] = a (2E)-enoyl-[ACP] + H2O</text>
        <dbReference type="Rhea" id="RHEA:13097"/>
        <dbReference type="Rhea" id="RHEA-COMP:9925"/>
        <dbReference type="Rhea" id="RHEA-COMP:9945"/>
        <dbReference type="ChEBI" id="CHEBI:15377"/>
        <dbReference type="ChEBI" id="CHEBI:78784"/>
        <dbReference type="ChEBI" id="CHEBI:78827"/>
        <dbReference type="EC" id="4.2.1.59"/>
    </reaction>
</comment>
<comment type="catalytic activity">
    <reaction evidence="2">
        <text>a 2,3-saturated acyl-[ACP] + NAD(+) = a (2E)-enoyl-[ACP] + NADH + H(+)</text>
        <dbReference type="Rhea" id="RHEA:10240"/>
        <dbReference type="Rhea" id="RHEA-COMP:9925"/>
        <dbReference type="Rhea" id="RHEA-COMP:9926"/>
        <dbReference type="ChEBI" id="CHEBI:15378"/>
        <dbReference type="ChEBI" id="CHEBI:57540"/>
        <dbReference type="ChEBI" id="CHEBI:57945"/>
        <dbReference type="ChEBI" id="CHEBI:78784"/>
        <dbReference type="ChEBI" id="CHEBI:78785"/>
        <dbReference type="EC" id="1.3.1.9"/>
    </reaction>
</comment>
<comment type="catalytic activity">
    <reaction evidence="2">
        <text>(9Z)-octadecenoyl-[ACP] + H2O = (9Z)-octadecenoate + holo-[ACP] + H(+)</text>
        <dbReference type="Rhea" id="RHEA:15057"/>
        <dbReference type="Rhea" id="RHEA-COMP:9685"/>
        <dbReference type="Rhea" id="RHEA-COMP:9924"/>
        <dbReference type="ChEBI" id="CHEBI:15377"/>
        <dbReference type="ChEBI" id="CHEBI:15378"/>
        <dbReference type="ChEBI" id="CHEBI:30823"/>
        <dbReference type="ChEBI" id="CHEBI:64479"/>
        <dbReference type="ChEBI" id="CHEBI:78783"/>
        <dbReference type="EC" id="3.1.2.14"/>
    </reaction>
</comment>
<comment type="pathway">
    <text evidence="8 12">Mycotoxin biosynthesis.</text>
</comment>
<comment type="subunit">
    <text evidence="1">[Alpha(6)beta(6)] hexamers of two multifunctional subunits (alpha and beta).</text>
</comment>
<comment type="induction">
    <text evidence="6 7">Expression is positively regulated by the dothistromin-specific transcription factors aflR and aflJ (PubMed:23207690, PubMed:25986547).</text>
</comment>
<comment type="similarity">
    <text evidence="10">Belongs to the fungal fatty acid synthetase subunit beta family.</text>
</comment>
<accession>M2XHU6</accession>
<sequence length="1904" mass="210940">MGSQHQSQHNSALIQAARDGEATLSVAFGGQGPSNLNCFNDLLELNKTYGSTLRPLIHTADATLSELASLPHRSGFHEDEGFETLDWLQDPKQAPSREYLALSPMSFPINTLLSLCNYCVTLRALRLDPGQFRSSLHNVVGHSQGIFAAAAIAKADSWESFLEAAEIALKISFWVGLESHTAAPPSHISAAAVQDCVEHGEGQPSSMLGITGLNRAQVEMLVERVNKSLSDDDRHVCLALANSRDKYTIAGPPHSLRAVCVQIREIRAADGVDQSRILFNKRKQEVDALFLPISAPYHSQYLKQVSNNVLDALDVDLVGSELGIPLLHTQSGQNLQDWKSKSIIKAIVCAVTTDMVEWPDVCQRLGSSYILGFGPGNIGNLIHESTEGTGVRVIQMNDRSPGSRGIGARAELFSEEMPPQALDWKQTFGPRLVLDHRGDVQIQTRMTQLLNAPPVMVAGMTPTTVTWDFVSCVMQAGYHVELAGGGYSSEARFEEALRRLAASIPIYRGITCNLLYANPQTIAWQVAVLRRLIKEGISIEGVTIGAGVPSPDVIKEYIAIGLKHISFKPGSIAAIDEVIEIAQAHPQFPIGLQWTGGRAGGHHSHEDLHLPILKTYARIRRCSNIVLIAGSGFGGGSDTYPYISGDWSKSLSYPPMPFDGILLGSRVMVAKEAHTSPQAKQLIVQTEGVGDNDWHTSFETPTGGVITITSEHGQPIHMLATRGVMLWKEFDKRIFSIKDAAKRLSYIRAHREEIITRLNKDYQKPWFGVNGDGQNVDLDRMTYREVLGRMCQLMSRGDNGWTDPSWLAMVKDFVEIAGERFGCQVDAHATKAPEVRTAFEATLGGSVDETLYPEDVALVLELLRRRGRKPPPFVPALDENFETWCKKDSLWQSEDVDSLVGKDVQRACIIQGPVAVRHSTIHDEPVQDILDNICNFHIESLLQSGETPGVARKQDLGRPNSIKKSVPGVQITTEKTTIRYQVHKTDKLPPEMDTLIEHIVGPAADCWTHHCLKDEWVFRDQARLRNPIRAAFLRQIQPGEVIEVRLSRDGNTQAIALKTALFGKSSLQTVLRIASTDGKSIKVALTPPSFLSDKPLGLQFAYQLSRKSRGSKLVEVTPNRLDAIKGFYAQLWVDSNQDVKEAGLNSEFWGEPTTLLAQDVQNYTAVVSRSTSPQLQAWNPTGSVPVDYCIVLAWTALTKPLTIPALQCDLLNLLHRSVNFKYAANARPLRLGDVTQTVSRITSLTIQPTGKLVEVSAELRRNDETVVTITTEFFIVGQFEDYETQFKSFEEPLFEVRVHSVTRQALLQSRKWLVLDDPSMDLAGLTLAFKLNTHTTFDHEGKVGALQVTGSVSRVESTGFDTRIGKVYFKKDSCNGNPVVDFLNRHGYPRVTRQPLENPGWNEGSTVLMKAPAKSNQYAMASKDTNPLHVCGVFARYAGLPDTVVHGMHTSAIVRRAVEWAVGDSDRSRFKKWQVSFEGMVRPNDRLKIQLQHTAMEHGRMIMKVQAFNDETGDKVIEAEAEVEQPRTGYVFCGQGSQEKGMGMSLYNARPEAKALWDRGDQFLREQYGFSLLSLVRENPTTLTINFGGRRGKRIRDNYLAMTKKTSLKADAKDVCIVQGLTPTSTSHTFSETKGLLFSTQFSQPAIALMEMVEHEHLFAKGVVQPSALFAGHSLGEYAALGACTTFMPFESLLTLIFYRGLKMQNALERDANGRTDYSMMAADPSRVGKAGFDERAFQCLVELVNEETGLLMEIVNHNVRSQQYVCAGHFRALWILGKVCDDLAKHPKIHLLSMQDLKDMVTTHVPAAGKLTNDIVLTRGKATIPLNGIDIPFHSTMLRGEIEHFRRYLLTKVNVPDIKPNELVGKWIPNVVGRPFSLDRSYIEHVQSVTGSEPLQKMLKAMA</sequence>
<evidence type="ECO:0000250" key="1">
    <source>
        <dbReference type="UniProtKB" id="P19097"/>
    </source>
</evidence>
<evidence type="ECO:0000250" key="2">
    <source>
        <dbReference type="UniProtKB" id="Q8TGA1"/>
    </source>
</evidence>
<evidence type="ECO:0000255" key="3"/>
<evidence type="ECO:0000269" key="4">
    <source>
    </source>
</evidence>
<evidence type="ECO:0000269" key="5">
    <source>
    </source>
</evidence>
<evidence type="ECO:0000269" key="6">
    <source>
    </source>
</evidence>
<evidence type="ECO:0000269" key="7">
    <source>
    </source>
</evidence>
<evidence type="ECO:0000303" key="8">
    <source>
    </source>
</evidence>
<evidence type="ECO:0000303" key="9">
    <source>
    </source>
</evidence>
<evidence type="ECO:0000305" key="10"/>
<evidence type="ECO:0000305" key="11">
    <source>
    </source>
</evidence>
<evidence type="ECO:0000305" key="12">
    <source>
    </source>
</evidence>
<evidence type="ECO:0000305" key="13">
    <source>
    </source>
</evidence>
<feature type="chain" id="PRO_0000443457" description="Fatty acid synthase beta subunit hexB">
    <location>
        <begin position="1"/>
        <end position="1904"/>
    </location>
</feature>
<feature type="domain" description="MaoC-like" evidence="3">
    <location>
        <begin position="1399"/>
        <end position="1512"/>
    </location>
</feature>
<feature type="region of interest" description="Acetyltransferase (AT) domain" evidence="3">
    <location>
        <begin position="24"/>
        <end position="395"/>
    </location>
</feature>
<feature type="region of interest" description="Enoyl reductase (ER) domain" evidence="3">
    <location>
        <begin position="447"/>
        <end position="691"/>
    </location>
</feature>
<feature type="region of interest" description="Dehydratase (DH) domain" evidence="3">
    <location>
        <begin position="1001"/>
        <end position="1491"/>
    </location>
</feature>
<feature type="region of interest" description="Malonyl/palmitoyl transferase (MT/PT) domain" evidence="3">
    <location>
        <begin position="1530"/>
        <end position="1893"/>
    </location>
</feature>
<protein>
    <recommendedName>
        <fullName evidence="9">Fatty acid synthase beta subunit hexB</fullName>
        <ecNumber evidence="12">2.3.1.86</ecNumber>
    </recommendedName>
    <alternativeName>
        <fullName evidence="12">S-acyl fatty acid synthase thioesterase</fullName>
        <ecNumber evidence="12">3.1.2.14</ecNumber>
    </alternativeName>
    <domain>
        <recommendedName>
            <fullName evidence="12">3-hydroxyacyl-[acyl-carrier-protein] dehydratase</fullName>
            <ecNumber evidence="12">4.2.1.59</ecNumber>
        </recommendedName>
    </domain>
    <domain>
        <recommendedName>
            <fullName evidence="12">Enoyl-[acyl-carrier-protein] reductase [NADH]</fullName>
            <ecNumber evidence="12">1.3.1.9</ecNumber>
        </recommendedName>
    </domain>
    <domain>
        <recommendedName>
            <fullName evidence="12">[Acyl-carrier-protein] acetyltransferase</fullName>
            <ecNumber evidence="12">2.3.1.38</ecNumber>
        </recommendedName>
    </domain>
    <domain>
        <recommendedName>
            <fullName evidence="12">[Acyl-carrier-protein] malonyltransferase</fullName>
            <ecNumber evidence="12">2.3.1.39</ecNumber>
        </recommendedName>
        <alternativeName>
            <fullName evidence="9">Dothistromin biosynthesis protein hexB</fullName>
        </alternativeName>
    </domain>
</protein>
<name>HEXB_DOTSN</name>